<comment type="function">
    <text evidence="1">Catalyzes the formation of pyridoxal 5'-phosphate from ribose 5-phosphate (RBP), glyceraldehyde 3-phosphate (G3P) and ammonia. The ammonia is provided by the PdxT subunit. Can also use ribulose 5-phosphate and dihydroxyacetone phosphate as substrates, resulting from enzyme-catalyzed isomerization of RBP and G3P, respectively.</text>
</comment>
<comment type="catalytic activity">
    <reaction evidence="1">
        <text>aldehydo-D-ribose 5-phosphate + D-glyceraldehyde 3-phosphate + L-glutamine = pyridoxal 5'-phosphate + L-glutamate + phosphate + 3 H2O + H(+)</text>
        <dbReference type="Rhea" id="RHEA:31507"/>
        <dbReference type="ChEBI" id="CHEBI:15377"/>
        <dbReference type="ChEBI" id="CHEBI:15378"/>
        <dbReference type="ChEBI" id="CHEBI:29985"/>
        <dbReference type="ChEBI" id="CHEBI:43474"/>
        <dbReference type="ChEBI" id="CHEBI:58273"/>
        <dbReference type="ChEBI" id="CHEBI:58359"/>
        <dbReference type="ChEBI" id="CHEBI:59776"/>
        <dbReference type="ChEBI" id="CHEBI:597326"/>
        <dbReference type="EC" id="4.3.3.6"/>
    </reaction>
</comment>
<comment type="pathway">
    <text evidence="1">Cofactor biosynthesis; pyridoxal 5'-phosphate biosynthesis.</text>
</comment>
<comment type="subunit">
    <text evidence="1">In the presence of PdxT, forms a dodecamer of heterodimers.</text>
</comment>
<comment type="similarity">
    <text evidence="1">Belongs to the PdxS/SNZ family.</text>
</comment>
<keyword id="KW-0456">Lyase</keyword>
<keyword id="KW-0663">Pyridoxal phosphate</keyword>
<keyword id="KW-1185">Reference proteome</keyword>
<keyword id="KW-0704">Schiff base</keyword>
<sequence>MSKASKTAAADASITTGSARVKRGFADKLKGGVIMDVVTPEQAKIAEDAGASAVMALERVPADIRAQGGVSRMSDPDMIAGIIDAVEIPVMAKARIGHFVEAEVLEALGVDFIDESEVLSPADYKNHIDKFDFETPFVCGATNLGEALRRINEGAAMIRSKGEAGTGDVSNAVTHMRTIRAEINRLSNMAEDELYVAAKELAAPYELVVEVARNGKLPVTLFTAGGIATPADAAMMMHLGAEGVFVGSGIFKSGNPAQRAAAIVKATQNYQDPKVIADVSRGLGEAMVGINVDELPVSHRLAERGW</sequence>
<organism>
    <name type="scientific">Corynebacterium urealyticum (strain ATCC 43042 / DSM 7109)</name>
    <dbReference type="NCBI Taxonomy" id="504474"/>
    <lineage>
        <taxon>Bacteria</taxon>
        <taxon>Bacillati</taxon>
        <taxon>Actinomycetota</taxon>
        <taxon>Actinomycetes</taxon>
        <taxon>Mycobacteriales</taxon>
        <taxon>Corynebacteriaceae</taxon>
        <taxon>Corynebacterium</taxon>
    </lineage>
</organism>
<gene>
    <name evidence="1" type="primary">pdxS</name>
    <name type="ordered locus">cu0931</name>
</gene>
<feature type="chain" id="PRO_1000188220" description="Pyridoxal 5'-phosphate synthase subunit PdxS">
    <location>
        <begin position="1"/>
        <end position="306"/>
    </location>
</feature>
<feature type="active site" description="Schiff-base intermediate with D-ribose 5-phosphate" evidence="1">
    <location>
        <position position="93"/>
    </location>
</feature>
<feature type="binding site" evidence="1">
    <location>
        <position position="36"/>
    </location>
    <ligand>
        <name>D-ribose 5-phosphate</name>
        <dbReference type="ChEBI" id="CHEBI:78346"/>
    </ligand>
</feature>
<feature type="binding site" evidence="1">
    <location>
        <position position="165"/>
    </location>
    <ligand>
        <name>D-ribose 5-phosphate</name>
        <dbReference type="ChEBI" id="CHEBI:78346"/>
    </ligand>
</feature>
<feature type="binding site" evidence="1">
    <location>
        <position position="177"/>
    </location>
    <ligand>
        <name>D-glyceraldehyde 3-phosphate</name>
        <dbReference type="ChEBI" id="CHEBI:59776"/>
    </ligand>
</feature>
<feature type="binding site" evidence="1">
    <location>
        <position position="226"/>
    </location>
    <ligand>
        <name>D-ribose 5-phosphate</name>
        <dbReference type="ChEBI" id="CHEBI:78346"/>
    </ligand>
</feature>
<feature type="binding site" evidence="1">
    <location>
        <begin position="247"/>
        <end position="248"/>
    </location>
    <ligand>
        <name>D-ribose 5-phosphate</name>
        <dbReference type="ChEBI" id="CHEBI:78346"/>
    </ligand>
</feature>
<dbReference type="EC" id="4.3.3.6" evidence="1"/>
<dbReference type="EMBL" id="AM942444">
    <property type="protein sequence ID" value="CAQ04891.1"/>
    <property type="molecule type" value="Genomic_DNA"/>
</dbReference>
<dbReference type="RefSeq" id="WP_012360180.1">
    <property type="nucleotide sequence ID" value="NC_010545.1"/>
</dbReference>
<dbReference type="SMR" id="B1VDJ3"/>
<dbReference type="STRING" id="504474.cu0931"/>
<dbReference type="GeneID" id="60603713"/>
<dbReference type="KEGG" id="cur:cu0931"/>
<dbReference type="eggNOG" id="COG0214">
    <property type="taxonomic scope" value="Bacteria"/>
</dbReference>
<dbReference type="HOGENOM" id="CLU_055352_1_0_11"/>
<dbReference type="UniPathway" id="UPA00245"/>
<dbReference type="Proteomes" id="UP000001727">
    <property type="component" value="Chromosome"/>
</dbReference>
<dbReference type="GO" id="GO:0036381">
    <property type="term" value="F:pyridoxal 5'-phosphate synthase (glutamine hydrolysing) activity"/>
    <property type="evidence" value="ECO:0007669"/>
    <property type="project" value="UniProtKB-UniRule"/>
</dbReference>
<dbReference type="GO" id="GO:0006520">
    <property type="term" value="P:amino acid metabolic process"/>
    <property type="evidence" value="ECO:0007669"/>
    <property type="project" value="TreeGrafter"/>
</dbReference>
<dbReference type="GO" id="GO:0042823">
    <property type="term" value="P:pyridoxal phosphate biosynthetic process"/>
    <property type="evidence" value="ECO:0007669"/>
    <property type="project" value="UniProtKB-UniRule"/>
</dbReference>
<dbReference type="GO" id="GO:0008615">
    <property type="term" value="P:pyridoxine biosynthetic process"/>
    <property type="evidence" value="ECO:0007669"/>
    <property type="project" value="TreeGrafter"/>
</dbReference>
<dbReference type="CDD" id="cd04727">
    <property type="entry name" value="pdxS"/>
    <property type="match status" value="1"/>
</dbReference>
<dbReference type="FunFam" id="3.20.20.70:FF:000001">
    <property type="entry name" value="Pyridoxine biosynthesis protein PDX1"/>
    <property type="match status" value="1"/>
</dbReference>
<dbReference type="Gene3D" id="3.20.20.70">
    <property type="entry name" value="Aldolase class I"/>
    <property type="match status" value="1"/>
</dbReference>
<dbReference type="HAMAP" id="MF_01824">
    <property type="entry name" value="PdxS"/>
    <property type="match status" value="1"/>
</dbReference>
<dbReference type="InterPro" id="IPR013785">
    <property type="entry name" value="Aldolase_TIM"/>
</dbReference>
<dbReference type="InterPro" id="IPR001852">
    <property type="entry name" value="PdxS/SNZ"/>
</dbReference>
<dbReference type="InterPro" id="IPR033755">
    <property type="entry name" value="PdxS/SNZ_N"/>
</dbReference>
<dbReference type="InterPro" id="IPR011060">
    <property type="entry name" value="RibuloseP-bd_barrel"/>
</dbReference>
<dbReference type="NCBIfam" id="NF003215">
    <property type="entry name" value="PRK04180.1"/>
    <property type="match status" value="1"/>
</dbReference>
<dbReference type="NCBIfam" id="TIGR00343">
    <property type="entry name" value="pyridoxal 5'-phosphate synthase lyase subunit PdxS"/>
    <property type="match status" value="1"/>
</dbReference>
<dbReference type="PANTHER" id="PTHR31829">
    <property type="entry name" value="PYRIDOXAL 5'-PHOSPHATE SYNTHASE SUBUNIT SNZ1-RELATED"/>
    <property type="match status" value="1"/>
</dbReference>
<dbReference type="PANTHER" id="PTHR31829:SF0">
    <property type="entry name" value="PYRIDOXAL 5'-PHOSPHATE SYNTHASE SUBUNIT SNZ1-RELATED"/>
    <property type="match status" value="1"/>
</dbReference>
<dbReference type="Pfam" id="PF01680">
    <property type="entry name" value="SOR_SNZ"/>
    <property type="match status" value="1"/>
</dbReference>
<dbReference type="PIRSF" id="PIRSF029271">
    <property type="entry name" value="Pdx1"/>
    <property type="match status" value="1"/>
</dbReference>
<dbReference type="SUPFAM" id="SSF51366">
    <property type="entry name" value="Ribulose-phoshate binding barrel"/>
    <property type="match status" value="1"/>
</dbReference>
<dbReference type="PROSITE" id="PS01235">
    <property type="entry name" value="PDXS_SNZ_1"/>
    <property type="match status" value="1"/>
</dbReference>
<dbReference type="PROSITE" id="PS51129">
    <property type="entry name" value="PDXS_SNZ_2"/>
    <property type="match status" value="1"/>
</dbReference>
<accession>B1VDJ3</accession>
<protein>
    <recommendedName>
        <fullName evidence="1">Pyridoxal 5'-phosphate synthase subunit PdxS</fullName>
        <shortName evidence="1">PLP synthase subunit PdxS</shortName>
        <ecNumber evidence="1">4.3.3.6</ecNumber>
    </recommendedName>
    <alternativeName>
        <fullName evidence="1">Pdx1</fullName>
    </alternativeName>
</protein>
<name>PDXS_CORU7</name>
<reference key="1">
    <citation type="journal article" date="2008" name="J. Biotechnol.">
        <title>The lifestyle of Corynebacterium urealyticum derived from its complete genome sequence established by pyrosequencing.</title>
        <authorList>
            <person name="Tauch A."/>
            <person name="Trost E."/>
            <person name="Tilker A."/>
            <person name="Ludewig U."/>
            <person name="Schneiker S."/>
            <person name="Goesmann A."/>
            <person name="Arnold W."/>
            <person name="Bekel T."/>
            <person name="Brinkrolf K."/>
            <person name="Brune I."/>
            <person name="Goetker S."/>
            <person name="Kalinowski J."/>
            <person name="Kamp P.-B."/>
            <person name="Lobo F.P."/>
            <person name="Viehoever P."/>
            <person name="Weisshaar B."/>
            <person name="Soriano F."/>
            <person name="Droege M."/>
            <person name="Puehler A."/>
        </authorList>
    </citation>
    <scope>NUCLEOTIDE SEQUENCE [LARGE SCALE GENOMIC DNA]</scope>
    <source>
        <strain>ATCC 43042 / DSM 7109</strain>
    </source>
</reference>
<evidence type="ECO:0000255" key="1">
    <source>
        <dbReference type="HAMAP-Rule" id="MF_01824"/>
    </source>
</evidence>
<proteinExistence type="inferred from homology"/>